<comment type="function">
    <text evidence="1">Specifically methylates guanosine-37 in various tRNAs.</text>
</comment>
<comment type="catalytic activity">
    <reaction evidence="1">
        <text>guanosine(37) in tRNA + S-adenosyl-L-methionine = N(1)-methylguanosine(37) in tRNA + S-adenosyl-L-homocysteine + H(+)</text>
        <dbReference type="Rhea" id="RHEA:36899"/>
        <dbReference type="Rhea" id="RHEA-COMP:10145"/>
        <dbReference type="Rhea" id="RHEA-COMP:10147"/>
        <dbReference type="ChEBI" id="CHEBI:15378"/>
        <dbReference type="ChEBI" id="CHEBI:57856"/>
        <dbReference type="ChEBI" id="CHEBI:59789"/>
        <dbReference type="ChEBI" id="CHEBI:73542"/>
        <dbReference type="ChEBI" id="CHEBI:74269"/>
        <dbReference type="EC" id="2.1.1.228"/>
    </reaction>
</comment>
<comment type="subunit">
    <text evidence="1">Homodimer.</text>
</comment>
<comment type="subcellular location">
    <subcellularLocation>
        <location evidence="1">Cytoplasm</location>
    </subcellularLocation>
</comment>
<comment type="similarity">
    <text evidence="1">Belongs to the RNA methyltransferase TrmD family.</text>
</comment>
<feature type="chain" id="PRO_1000130158" description="tRNA (guanine-N(1)-)-methyltransferase">
    <location>
        <begin position="1"/>
        <end position="231"/>
    </location>
</feature>
<feature type="binding site" evidence="1">
    <location>
        <position position="112"/>
    </location>
    <ligand>
        <name>S-adenosyl-L-methionine</name>
        <dbReference type="ChEBI" id="CHEBI:59789"/>
    </ligand>
</feature>
<feature type="binding site" evidence="1">
    <location>
        <begin position="132"/>
        <end position="137"/>
    </location>
    <ligand>
        <name>S-adenosyl-L-methionine</name>
        <dbReference type="ChEBI" id="CHEBI:59789"/>
    </ligand>
</feature>
<accession>B7KHC2</accession>
<gene>
    <name evidence="1" type="primary">trmD</name>
    <name type="ordered locus">PCC7424_0875</name>
</gene>
<keyword id="KW-0963">Cytoplasm</keyword>
<keyword id="KW-0489">Methyltransferase</keyword>
<keyword id="KW-1185">Reference proteome</keyword>
<keyword id="KW-0949">S-adenosyl-L-methionine</keyword>
<keyword id="KW-0808">Transferase</keyword>
<keyword id="KW-0819">tRNA processing</keyword>
<evidence type="ECO:0000255" key="1">
    <source>
        <dbReference type="HAMAP-Rule" id="MF_00605"/>
    </source>
</evidence>
<organism>
    <name type="scientific">Gloeothece citriformis (strain PCC 7424)</name>
    <name type="common">Cyanothece sp. (strain PCC 7424)</name>
    <dbReference type="NCBI Taxonomy" id="65393"/>
    <lineage>
        <taxon>Bacteria</taxon>
        <taxon>Bacillati</taxon>
        <taxon>Cyanobacteriota</taxon>
        <taxon>Cyanophyceae</taxon>
        <taxon>Oscillatoriophycideae</taxon>
        <taxon>Chroococcales</taxon>
        <taxon>Aphanothecaceae</taxon>
        <taxon>Gloeothece</taxon>
        <taxon>Gloeothece citriformis</taxon>
    </lineage>
</organism>
<proteinExistence type="inferred from homology"/>
<dbReference type="EC" id="2.1.1.228" evidence="1"/>
<dbReference type="EMBL" id="CP001291">
    <property type="protein sequence ID" value="ACK69331.1"/>
    <property type="molecule type" value="Genomic_DNA"/>
</dbReference>
<dbReference type="RefSeq" id="WP_012598278.1">
    <property type="nucleotide sequence ID" value="NC_011729.1"/>
</dbReference>
<dbReference type="SMR" id="B7KHC2"/>
<dbReference type="STRING" id="65393.PCC7424_0875"/>
<dbReference type="KEGG" id="cyc:PCC7424_0875"/>
<dbReference type="eggNOG" id="COG0336">
    <property type="taxonomic scope" value="Bacteria"/>
</dbReference>
<dbReference type="HOGENOM" id="CLU_047363_0_1_3"/>
<dbReference type="OrthoDB" id="9807416at2"/>
<dbReference type="Proteomes" id="UP000002384">
    <property type="component" value="Chromosome"/>
</dbReference>
<dbReference type="GO" id="GO:0005829">
    <property type="term" value="C:cytosol"/>
    <property type="evidence" value="ECO:0007669"/>
    <property type="project" value="TreeGrafter"/>
</dbReference>
<dbReference type="GO" id="GO:0052906">
    <property type="term" value="F:tRNA (guanine(37)-N1)-methyltransferase activity"/>
    <property type="evidence" value="ECO:0007669"/>
    <property type="project" value="UniProtKB-UniRule"/>
</dbReference>
<dbReference type="GO" id="GO:0002939">
    <property type="term" value="P:tRNA N1-guanine methylation"/>
    <property type="evidence" value="ECO:0007669"/>
    <property type="project" value="TreeGrafter"/>
</dbReference>
<dbReference type="CDD" id="cd18080">
    <property type="entry name" value="TrmD-like"/>
    <property type="match status" value="1"/>
</dbReference>
<dbReference type="FunFam" id="3.40.1280.10:FF:000001">
    <property type="entry name" value="tRNA (guanine-N(1)-)-methyltransferase"/>
    <property type="match status" value="1"/>
</dbReference>
<dbReference type="Gene3D" id="3.40.1280.10">
    <property type="match status" value="1"/>
</dbReference>
<dbReference type="Gene3D" id="1.10.1270.20">
    <property type="entry name" value="tRNA(m1g37)methyltransferase, domain 2"/>
    <property type="match status" value="1"/>
</dbReference>
<dbReference type="HAMAP" id="MF_00605">
    <property type="entry name" value="TrmD"/>
    <property type="match status" value="1"/>
</dbReference>
<dbReference type="InterPro" id="IPR029028">
    <property type="entry name" value="Alpha/beta_knot_MTases"/>
</dbReference>
<dbReference type="InterPro" id="IPR023148">
    <property type="entry name" value="tRNA_m1G_MeTrfase_C_sf"/>
</dbReference>
<dbReference type="InterPro" id="IPR002649">
    <property type="entry name" value="tRNA_m1G_MeTrfase_TrmD"/>
</dbReference>
<dbReference type="InterPro" id="IPR029026">
    <property type="entry name" value="tRNA_m1G_MTases_N"/>
</dbReference>
<dbReference type="InterPro" id="IPR016009">
    <property type="entry name" value="tRNA_MeTrfase_TRMD/TRM10"/>
</dbReference>
<dbReference type="NCBIfam" id="NF000648">
    <property type="entry name" value="PRK00026.1"/>
    <property type="match status" value="1"/>
</dbReference>
<dbReference type="NCBIfam" id="TIGR00088">
    <property type="entry name" value="trmD"/>
    <property type="match status" value="1"/>
</dbReference>
<dbReference type="PANTHER" id="PTHR46417">
    <property type="entry name" value="TRNA (GUANINE-N(1)-)-METHYLTRANSFERASE"/>
    <property type="match status" value="1"/>
</dbReference>
<dbReference type="PANTHER" id="PTHR46417:SF1">
    <property type="entry name" value="TRNA (GUANINE-N(1)-)-METHYLTRANSFERASE"/>
    <property type="match status" value="1"/>
</dbReference>
<dbReference type="Pfam" id="PF01746">
    <property type="entry name" value="tRNA_m1G_MT"/>
    <property type="match status" value="1"/>
</dbReference>
<dbReference type="PIRSF" id="PIRSF000386">
    <property type="entry name" value="tRNA_mtase"/>
    <property type="match status" value="1"/>
</dbReference>
<dbReference type="SUPFAM" id="SSF75217">
    <property type="entry name" value="alpha/beta knot"/>
    <property type="match status" value="1"/>
</dbReference>
<name>TRMD_GLOC7</name>
<protein>
    <recommendedName>
        <fullName evidence="1">tRNA (guanine-N(1)-)-methyltransferase</fullName>
        <ecNumber evidence="1">2.1.1.228</ecNumber>
    </recommendedName>
    <alternativeName>
        <fullName evidence="1">M1G-methyltransferase</fullName>
    </alternativeName>
    <alternativeName>
        <fullName evidence="1">tRNA [GM37] methyltransferase</fullName>
    </alternativeName>
</protein>
<reference key="1">
    <citation type="journal article" date="2011" name="MBio">
        <title>Novel metabolic attributes of the genus Cyanothece, comprising a group of unicellular nitrogen-fixing Cyanobacteria.</title>
        <authorList>
            <person name="Bandyopadhyay A."/>
            <person name="Elvitigala T."/>
            <person name="Welsh E."/>
            <person name="Stockel J."/>
            <person name="Liberton M."/>
            <person name="Min H."/>
            <person name="Sherman L.A."/>
            <person name="Pakrasi H.B."/>
        </authorList>
    </citation>
    <scope>NUCLEOTIDE SEQUENCE [LARGE SCALE GENOMIC DNA]</scope>
    <source>
        <strain>PCC 7424</strain>
    </source>
</reference>
<sequence>MRFDIITLFPDFFTSPLQSGLLGKALDKQIAQVNLVNPRDFALDKHHRVDDEPYGGGVGMLLKPEPIFAAVESLEILPRREVVLMTPQGQPLSQPILRELATDFDQLVLICGHYEGVDERVTQYLVTREISLGDFVLTCGEIPALTVLNGVIRLLPGTVGKEESLKLESFEADLLDYPQYTRPALFRDWEVPAVLRSGNHQAIEQWRKQQQIERTKERRPDLWEKWTINNG</sequence>